<dbReference type="EC" id="2.8.4.4" evidence="1"/>
<dbReference type="EMBL" id="CP000139">
    <property type="protein sequence ID" value="ABR40911.1"/>
    <property type="molecule type" value="Genomic_DNA"/>
</dbReference>
<dbReference type="RefSeq" id="WP_012055623.1">
    <property type="nucleotide sequence ID" value="NZ_JANSWM010000071.1"/>
</dbReference>
<dbReference type="SMR" id="A6L5E7"/>
<dbReference type="STRING" id="435590.BVU_3282"/>
<dbReference type="PaxDb" id="435590-BVU_3282"/>
<dbReference type="GeneID" id="5304243"/>
<dbReference type="KEGG" id="bvu:BVU_3282"/>
<dbReference type="eggNOG" id="COG0621">
    <property type="taxonomic scope" value="Bacteria"/>
</dbReference>
<dbReference type="HOGENOM" id="CLU_018697_0_1_10"/>
<dbReference type="BioCyc" id="BVUL435590:G1G59-3405-MONOMER"/>
<dbReference type="Proteomes" id="UP000002861">
    <property type="component" value="Chromosome"/>
</dbReference>
<dbReference type="GO" id="GO:0005829">
    <property type="term" value="C:cytosol"/>
    <property type="evidence" value="ECO:0007669"/>
    <property type="project" value="TreeGrafter"/>
</dbReference>
<dbReference type="GO" id="GO:0051539">
    <property type="term" value="F:4 iron, 4 sulfur cluster binding"/>
    <property type="evidence" value="ECO:0007669"/>
    <property type="project" value="UniProtKB-UniRule"/>
</dbReference>
<dbReference type="GO" id="GO:0035599">
    <property type="term" value="F:aspartic acid methylthiotransferase activity"/>
    <property type="evidence" value="ECO:0007669"/>
    <property type="project" value="TreeGrafter"/>
</dbReference>
<dbReference type="GO" id="GO:0046872">
    <property type="term" value="F:metal ion binding"/>
    <property type="evidence" value="ECO:0007669"/>
    <property type="project" value="UniProtKB-KW"/>
</dbReference>
<dbReference type="GO" id="GO:0103039">
    <property type="term" value="F:protein methylthiotransferase activity"/>
    <property type="evidence" value="ECO:0007669"/>
    <property type="project" value="UniProtKB-EC"/>
</dbReference>
<dbReference type="GO" id="GO:0006400">
    <property type="term" value="P:tRNA modification"/>
    <property type="evidence" value="ECO:0007669"/>
    <property type="project" value="InterPro"/>
</dbReference>
<dbReference type="CDD" id="cd01335">
    <property type="entry name" value="Radical_SAM"/>
    <property type="match status" value="1"/>
</dbReference>
<dbReference type="FunFam" id="2.40.50.140:FF:000210">
    <property type="entry name" value="Ribosomal protein S12 methylthiotransferase RimO"/>
    <property type="match status" value="1"/>
</dbReference>
<dbReference type="FunFam" id="3.80.30.20:FF:000001">
    <property type="entry name" value="tRNA-2-methylthio-N(6)-dimethylallyladenosine synthase 2"/>
    <property type="match status" value="1"/>
</dbReference>
<dbReference type="Gene3D" id="3.40.50.12160">
    <property type="entry name" value="Methylthiotransferase, N-terminal domain"/>
    <property type="match status" value="1"/>
</dbReference>
<dbReference type="Gene3D" id="2.40.50.140">
    <property type="entry name" value="Nucleic acid-binding proteins"/>
    <property type="match status" value="1"/>
</dbReference>
<dbReference type="Gene3D" id="3.80.30.20">
    <property type="entry name" value="tm_1862 like domain"/>
    <property type="match status" value="1"/>
</dbReference>
<dbReference type="HAMAP" id="MF_01865">
    <property type="entry name" value="MTTase_RimO"/>
    <property type="match status" value="1"/>
</dbReference>
<dbReference type="InterPro" id="IPR006638">
    <property type="entry name" value="Elp3/MiaA/NifB-like_rSAM"/>
</dbReference>
<dbReference type="InterPro" id="IPR005839">
    <property type="entry name" value="Methylthiotransferase"/>
</dbReference>
<dbReference type="InterPro" id="IPR020612">
    <property type="entry name" value="Methylthiotransferase_CS"/>
</dbReference>
<dbReference type="InterPro" id="IPR013848">
    <property type="entry name" value="Methylthiotransferase_N"/>
</dbReference>
<dbReference type="InterPro" id="IPR038135">
    <property type="entry name" value="Methylthiotransferase_N_sf"/>
</dbReference>
<dbReference type="InterPro" id="IPR012340">
    <property type="entry name" value="NA-bd_OB-fold"/>
</dbReference>
<dbReference type="InterPro" id="IPR005840">
    <property type="entry name" value="Ribosomal_uS12_MeSTrfase_RimO"/>
</dbReference>
<dbReference type="InterPro" id="IPR007197">
    <property type="entry name" value="rSAM"/>
</dbReference>
<dbReference type="InterPro" id="IPR023404">
    <property type="entry name" value="rSAM_horseshoe"/>
</dbReference>
<dbReference type="InterPro" id="IPR002792">
    <property type="entry name" value="TRAM_dom"/>
</dbReference>
<dbReference type="NCBIfam" id="TIGR01125">
    <property type="entry name" value="30S ribosomal protein S12 methylthiotransferase RimO"/>
    <property type="match status" value="1"/>
</dbReference>
<dbReference type="NCBIfam" id="TIGR00089">
    <property type="entry name" value="MiaB/RimO family radical SAM methylthiotransferase"/>
    <property type="match status" value="1"/>
</dbReference>
<dbReference type="PANTHER" id="PTHR43837">
    <property type="entry name" value="RIBOSOMAL PROTEIN S12 METHYLTHIOTRANSFERASE RIMO"/>
    <property type="match status" value="1"/>
</dbReference>
<dbReference type="PANTHER" id="PTHR43837:SF1">
    <property type="entry name" value="RIBOSOMAL PROTEIN US12 METHYLTHIOTRANSFERASE RIMO"/>
    <property type="match status" value="1"/>
</dbReference>
<dbReference type="Pfam" id="PF04055">
    <property type="entry name" value="Radical_SAM"/>
    <property type="match status" value="1"/>
</dbReference>
<dbReference type="Pfam" id="PF18693">
    <property type="entry name" value="TRAM_2"/>
    <property type="match status" value="1"/>
</dbReference>
<dbReference type="Pfam" id="PF00919">
    <property type="entry name" value="UPF0004"/>
    <property type="match status" value="1"/>
</dbReference>
<dbReference type="SFLD" id="SFLDG01082">
    <property type="entry name" value="B12-binding_domain_containing"/>
    <property type="match status" value="1"/>
</dbReference>
<dbReference type="SFLD" id="SFLDS00029">
    <property type="entry name" value="Radical_SAM"/>
    <property type="match status" value="1"/>
</dbReference>
<dbReference type="SFLD" id="SFLDF00274">
    <property type="entry name" value="ribosomal_protein_S12_methylth"/>
    <property type="match status" value="1"/>
</dbReference>
<dbReference type="SMART" id="SM00729">
    <property type="entry name" value="Elp3"/>
    <property type="match status" value="1"/>
</dbReference>
<dbReference type="SUPFAM" id="SSF102114">
    <property type="entry name" value="Radical SAM enzymes"/>
    <property type="match status" value="1"/>
</dbReference>
<dbReference type="PROSITE" id="PS51449">
    <property type="entry name" value="MTTASE_N"/>
    <property type="match status" value="1"/>
</dbReference>
<dbReference type="PROSITE" id="PS01278">
    <property type="entry name" value="MTTASE_RADICAL"/>
    <property type="match status" value="1"/>
</dbReference>
<dbReference type="PROSITE" id="PS51918">
    <property type="entry name" value="RADICAL_SAM"/>
    <property type="match status" value="1"/>
</dbReference>
<dbReference type="PROSITE" id="PS50926">
    <property type="entry name" value="TRAM"/>
    <property type="match status" value="1"/>
</dbReference>
<comment type="function">
    <text evidence="1">Catalyzes the methylthiolation of an aspartic acid residue of ribosomal protein uS12.</text>
</comment>
<comment type="catalytic activity">
    <reaction evidence="1">
        <text>L-aspartate(89)-[ribosomal protein uS12]-hydrogen + (sulfur carrier)-SH + AH2 + 2 S-adenosyl-L-methionine = 3-methylsulfanyl-L-aspartate(89)-[ribosomal protein uS12]-hydrogen + (sulfur carrier)-H + 5'-deoxyadenosine + L-methionine + A + S-adenosyl-L-homocysteine + 2 H(+)</text>
        <dbReference type="Rhea" id="RHEA:37087"/>
        <dbReference type="Rhea" id="RHEA-COMP:10460"/>
        <dbReference type="Rhea" id="RHEA-COMP:10461"/>
        <dbReference type="Rhea" id="RHEA-COMP:14737"/>
        <dbReference type="Rhea" id="RHEA-COMP:14739"/>
        <dbReference type="ChEBI" id="CHEBI:13193"/>
        <dbReference type="ChEBI" id="CHEBI:15378"/>
        <dbReference type="ChEBI" id="CHEBI:17319"/>
        <dbReference type="ChEBI" id="CHEBI:17499"/>
        <dbReference type="ChEBI" id="CHEBI:29917"/>
        <dbReference type="ChEBI" id="CHEBI:29961"/>
        <dbReference type="ChEBI" id="CHEBI:57844"/>
        <dbReference type="ChEBI" id="CHEBI:57856"/>
        <dbReference type="ChEBI" id="CHEBI:59789"/>
        <dbReference type="ChEBI" id="CHEBI:64428"/>
        <dbReference type="ChEBI" id="CHEBI:73599"/>
        <dbReference type="EC" id="2.8.4.4"/>
    </reaction>
</comment>
<comment type="cofactor">
    <cofactor evidence="1">
        <name>[4Fe-4S] cluster</name>
        <dbReference type="ChEBI" id="CHEBI:49883"/>
    </cofactor>
    <text evidence="1">Binds 2 [4Fe-4S] clusters. One cluster is coordinated with 3 cysteines and an exchangeable S-adenosyl-L-methionine.</text>
</comment>
<comment type="subcellular location">
    <subcellularLocation>
        <location evidence="1">Cytoplasm</location>
    </subcellularLocation>
</comment>
<comment type="similarity">
    <text evidence="1">Belongs to the methylthiotransferase family. RimO subfamily.</text>
</comment>
<gene>
    <name evidence="1" type="primary">rimO</name>
    <name type="ordered locus">BVU_3282</name>
</gene>
<protein>
    <recommendedName>
        <fullName evidence="1">Ribosomal protein uS12 methylthiotransferase RimO</fullName>
        <shortName evidence="1">uS12 MTTase</shortName>
        <shortName evidence="1">uS12 methylthiotransferase</shortName>
        <ecNumber evidence="1">2.8.4.4</ecNumber>
    </recommendedName>
    <alternativeName>
        <fullName evidence="1">Ribosomal protein uS12 (aspartate-C(3))-methylthiotransferase</fullName>
    </alternativeName>
    <alternativeName>
        <fullName evidence="1">Ribosome maturation factor RimO</fullName>
    </alternativeName>
</protein>
<sequence>MKRNTIDIITLGCSKNLVDSEKLMRQLEANGYKVTHDSDKPQGEIAVINTCGFIGDAKEESINMILEFCQAKEEGKLKKLYVMGCLSERYLKELALEIPQVDKFYGKFNWNELLADLGKAYKSEFAIERTLTTPHHYAYLKISEGCDRKCSYCAIPIITGRHISRPMEEIIDEVKLLVSEGVKEFQIIAQELTYYGVDLYKSQKLPELIERIANVPGVEWIRLHYAYPAHFPEELFRVMREHDNVCKYMDIALQHISDNMLNKMRRHVSKAETYELIEKFRREVPGIHLRTTLMVGHPGETEEDFEELKEFVKKVRFDRMGAFAYSEEEGTFAAKEYEDSISHEVKQQRLDELMALQQEIAGELSQTKIGKEFKVIIDRKEGDYYIGRTQFDSPEVDPEVLIKADEEYLKIGEFYKVKITAADDFDLYASIL</sequence>
<organism>
    <name type="scientific">Phocaeicola vulgatus (strain ATCC 8482 / DSM 1447 / JCM 5826 / CCUG 4940 / NBRC 14291 / NCTC 11154)</name>
    <name type="common">Bacteroides vulgatus</name>
    <dbReference type="NCBI Taxonomy" id="435590"/>
    <lineage>
        <taxon>Bacteria</taxon>
        <taxon>Pseudomonadati</taxon>
        <taxon>Bacteroidota</taxon>
        <taxon>Bacteroidia</taxon>
        <taxon>Bacteroidales</taxon>
        <taxon>Bacteroidaceae</taxon>
        <taxon>Phocaeicola</taxon>
    </lineage>
</organism>
<evidence type="ECO:0000255" key="1">
    <source>
        <dbReference type="HAMAP-Rule" id="MF_01865"/>
    </source>
</evidence>
<evidence type="ECO:0000255" key="2">
    <source>
        <dbReference type="PROSITE-ProRule" id="PRU01266"/>
    </source>
</evidence>
<proteinExistence type="inferred from homology"/>
<reference key="1">
    <citation type="journal article" date="2007" name="PLoS Biol.">
        <title>Evolution of symbiotic bacteria in the distal human intestine.</title>
        <authorList>
            <person name="Xu J."/>
            <person name="Mahowald M.A."/>
            <person name="Ley R.E."/>
            <person name="Lozupone C.A."/>
            <person name="Hamady M."/>
            <person name="Martens E.C."/>
            <person name="Henrissat B."/>
            <person name="Coutinho P.M."/>
            <person name="Minx P."/>
            <person name="Latreille P."/>
            <person name="Cordum H."/>
            <person name="Van Brunt A."/>
            <person name="Kim K."/>
            <person name="Fulton R.S."/>
            <person name="Fulton L.A."/>
            <person name="Clifton S.W."/>
            <person name="Wilson R.K."/>
            <person name="Knight R.D."/>
            <person name="Gordon J.I."/>
        </authorList>
    </citation>
    <scope>NUCLEOTIDE SEQUENCE [LARGE SCALE GENOMIC DNA]</scope>
    <source>
        <strain>ATCC 8482 / DSM 1447 / JCM 5826 / CCUG 4940 / NBRC 14291 / NCTC 11154</strain>
    </source>
</reference>
<name>RIMO_PHOV8</name>
<accession>A6L5E7</accession>
<feature type="chain" id="PRO_0000374708" description="Ribosomal protein uS12 methylthiotransferase RimO">
    <location>
        <begin position="1"/>
        <end position="432"/>
    </location>
</feature>
<feature type="domain" description="MTTase N-terminal" evidence="1">
    <location>
        <begin position="4"/>
        <end position="122"/>
    </location>
</feature>
<feature type="domain" description="Radical SAM core" evidence="2">
    <location>
        <begin position="132"/>
        <end position="363"/>
    </location>
</feature>
<feature type="domain" description="TRAM" evidence="1">
    <location>
        <begin position="366"/>
        <end position="432"/>
    </location>
</feature>
<feature type="binding site" evidence="1">
    <location>
        <position position="13"/>
    </location>
    <ligand>
        <name>[4Fe-4S] cluster</name>
        <dbReference type="ChEBI" id="CHEBI:49883"/>
        <label>1</label>
    </ligand>
</feature>
<feature type="binding site" evidence="1">
    <location>
        <position position="51"/>
    </location>
    <ligand>
        <name>[4Fe-4S] cluster</name>
        <dbReference type="ChEBI" id="CHEBI:49883"/>
        <label>1</label>
    </ligand>
</feature>
<feature type="binding site" evidence="1">
    <location>
        <position position="85"/>
    </location>
    <ligand>
        <name>[4Fe-4S] cluster</name>
        <dbReference type="ChEBI" id="CHEBI:49883"/>
        <label>1</label>
    </ligand>
</feature>
<feature type="binding site" evidence="1">
    <location>
        <position position="146"/>
    </location>
    <ligand>
        <name>[4Fe-4S] cluster</name>
        <dbReference type="ChEBI" id="CHEBI:49883"/>
        <label>2</label>
        <note>4Fe-4S-S-AdoMet</note>
    </ligand>
</feature>
<feature type="binding site" evidence="1">
    <location>
        <position position="150"/>
    </location>
    <ligand>
        <name>[4Fe-4S] cluster</name>
        <dbReference type="ChEBI" id="CHEBI:49883"/>
        <label>2</label>
        <note>4Fe-4S-S-AdoMet</note>
    </ligand>
</feature>
<feature type="binding site" evidence="1">
    <location>
        <position position="153"/>
    </location>
    <ligand>
        <name>[4Fe-4S] cluster</name>
        <dbReference type="ChEBI" id="CHEBI:49883"/>
        <label>2</label>
        <note>4Fe-4S-S-AdoMet</note>
    </ligand>
</feature>
<keyword id="KW-0004">4Fe-4S</keyword>
<keyword id="KW-0963">Cytoplasm</keyword>
<keyword id="KW-0408">Iron</keyword>
<keyword id="KW-0411">Iron-sulfur</keyword>
<keyword id="KW-0479">Metal-binding</keyword>
<keyword id="KW-0949">S-adenosyl-L-methionine</keyword>
<keyword id="KW-0808">Transferase</keyword>